<accession>Q7EY72</accession>
<feature type="chain" id="PRO_0000438483" description="Vacuolar fusion protein CCZ1 homolog">
    <location>
        <begin position="1"/>
        <end position="492"/>
    </location>
</feature>
<feature type="region of interest" description="Disordered" evidence="2">
    <location>
        <begin position="255"/>
        <end position="275"/>
    </location>
</feature>
<feature type="compositionally biased region" description="Polar residues" evidence="2">
    <location>
        <begin position="260"/>
        <end position="269"/>
    </location>
</feature>
<name>CCZ_ORYSJ</name>
<evidence type="ECO:0000250" key="1">
    <source>
        <dbReference type="UniProtKB" id="F4I2S4"/>
    </source>
</evidence>
<evidence type="ECO:0000256" key="2">
    <source>
        <dbReference type="SAM" id="MobiDB-lite"/>
    </source>
</evidence>
<evidence type="ECO:0000305" key="3"/>
<evidence type="ECO:0000312" key="4">
    <source>
        <dbReference type="EMBL" id="BAD01185.1"/>
    </source>
</evidence>
<evidence type="ECO:0000312" key="5">
    <source>
        <dbReference type="EMBL" id="BAD01463.1"/>
    </source>
</evidence>
<evidence type="ECO:0000312" key="6">
    <source>
        <dbReference type="EMBL" id="BAF23756.1"/>
    </source>
</evidence>
<sequence length="492" mass="54850">MGLSSAAAGEGPQLCVFDLRRGQQEGQELDKILFFHPTDCPILLQLSVIGLCEGIITFARIFSPDDDCEVIESEKHSHVFYQAEADIWMVLVVEKNKDIESTWRCGALQGILKEVHSLFTMFHGPIRTLLDRQPSAELARGHLRTFFTDYLSDFNAGKKIQLPTFRDCLKERGTVQMLTISREVALEVQSLTTVLGSCLGNVMCQSLVLFEDLLVSTTLPPDDTLNLYTYAILRLTPRALLSNATSWSYLRKGTSVHAGPTSSSSNGTASVERPLQREKLYKGKDGFVAAGSTTSEVRGAVAWVPILWFQQAEDRMHLCVYQHKNITILLLIPASSLINGDDGIAHVKRHLLENASQNIVTLELKLSRGWGGENAYHVGGYRYLLVDPDRKVSRASPPGKVTTLSKDSLLSLNRLREEIDLEKSRAKRSDSCHDKDFEVCIRAKNNAWVIAKVTRGRELYMALEKAGETLLYASTAIEKFSNRYCEGAFSTD</sequence>
<keyword id="KW-0967">Endosome</keyword>
<keyword id="KW-0344">Guanine-nucleotide releasing factor</keyword>
<keyword id="KW-1185">Reference proteome</keyword>
<comment type="function">
    <text evidence="1">Plays an important role in membrane trafficking through the secretory apparatus. In complex with MON1, acts as a guanine exchange factor (GEF) for Rab7 protein family. Promotes the exchange of GDP to GTP, converting it from an inactive GDP-bound form into an active GTP-bound form. The active form is involved in protein trafficking from prevacuolar compartments (PVCs) to vacuoles. May serve as a linker between Rab5 and Rab7 protein families in PVCs and mediate PVC maturation.</text>
</comment>
<comment type="subunit">
    <text evidence="1">Interacts with MON1.</text>
</comment>
<comment type="subcellular location">
    <subcellularLocation>
        <location evidence="1">Endosome</location>
    </subcellularLocation>
    <subcellularLocation>
        <location evidence="1">Prevacuolar compartment</location>
    </subcellularLocation>
</comment>
<comment type="similarity">
    <text evidence="3">Belongs to the CCZ1 family.</text>
</comment>
<dbReference type="EMBL" id="AP003898">
    <property type="protein sequence ID" value="BAD01185.1"/>
    <property type="molecule type" value="Genomic_DNA"/>
</dbReference>
<dbReference type="EMBL" id="AP005734">
    <property type="protein sequence ID" value="BAD01463.1"/>
    <property type="molecule type" value="Genomic_DNA"/>
</dbReference>
<dbReference type="EMBL" id="AP008214">
    <property type="protein sequence ID" value="BAF23756.1"/>
    <property type="molecule type" value="Genomic_DNA"/>
</dbReference>
<dbReference type="EMBL" id="AP014964">
    <property type="protein sequence ID" value="BAT05515.1"/>
    <property type="molecule type" value="Genomic_DNA"/>
</dbReference>
<dbReference type="EMBL" id="AK066491">
    <property type="protein sequence ID" value="BAG89996.1"/>
    <property type="molecule type" value="mRNA"/>
</dbReference>
<dbReference type="RefSeq" id="NP_001390506.1">
    <property type="nucleotide sequence ID" value="NM_001403577.1"/>
</dbReference>
<dbReference type="RefSeq" id="XP_015648148.1">
    <property type="nucleotide sequence ID" value="XM_015792662.1"/>
</dbReference>
<dbReference type="SMR" id="Q7EY72"/>
<dbReference type="FunCoup" id="Q7EY72">
    <property type="interactions" value="1682"/>
</dbReference>
<dbReference type="STRING" id="39947.Q7EY72"/>
<dbReference type="PaxDb" id="39947-Q7EY72"/>
<dbReference type="EnsemblPlants" id="Os08t0427300-01">
    <property type="protein sequence ID" value="Os08t0427300-01"/>
    <property type="gene ID" value="Os08g0427300"/>
</dbReference>
<dbReference type="GeneID" id="4345617"/>
<dbReference type="Gramene" id="Os08t0427300-01">
    <property type="protein sequence ID" value="Os08t0427300-01"/>
    <property type="gene ID" value="Os08g0427300"/>
</dbReference>
<dbReference type="KEGG" id="dosa:Os08g0427300"/>
<dbReference type="eggNOG" id="KOG2622">
    <property type="taxonomic scope" value="Eukaryota"/>
</dbReference>
<dbReference type="HOGENOM" id="CLU_037828_1_1_1"/>
<dbReference type="InParanoid" id="Q7EY72"/>
<dbReference type="OMA" id="DCQALHT"/>
<dbReference type="OrthoDB" id="240546at2759"/>
<dbReference type="Proteomes" id="UP000000763">
    <property type="component" value="Chromosome 8"/>
</dbReference>
<dbReference type="Proteomes" id="UP000059680">
    <property type="component" value="Chromosome 8"/>
</dbReference>
<dbReference type="ExpressionAtlas" id="Q7EY72">
    <property type="expression patterns" value="baseline and differential"/>
</dbReference>
<dbReference type="GO" id="GO:0043231">
    <property type="term" value="C:intracellular membrane-bounded organelle"/>
    <property type="evidence" value="ECO:0000318"/>
    <property type="project" value="GO_Central"/>
</dbReference>
<dbReference type="GO" id="GO:0035658">
    <property type="term" value="C:Mon1-Ccz1 complex"/>
    <property type="evidence" value="ECO:0007669"/>
    <property type="project" value="InterPro"/>
</dbReference>
<dbReference type="GO" id="GO:0005085">
    <property type="term" value="F:guanyl-nucleotide exchange factor activity"/>
    <property type="evidence" value="ECO:0007669"/>
    <property type="project" value="UniProtKB-KW"/>
</dbReference>
<dbReference type="GO" id="GO:0016192">
    <property type="term" value="P:vesicle-mediated transport"/>
    <property type="evidence" value="ECO:0000318"/>
    <property type="project" value="GO_Central"/>
</dbReference>
<dbReference type="InterPro" id="IPR013176">
    <property type="entry name" value="Ccz1"/>
</dbReference>
<dbReference type="InterPro" id="IPR043987">
    <property type="entry name" value="CCZ1/INTU/HSP4_longin_1"/>
</dbReference>
<dbReference type="PANTHER" id="PTHR13056">
    <property type="entry name" value="VACUOLAR FUSION PROTEIN CCZ1 HOMOLOG-RELATED"/>
    <property type="match status" value="1"/>
</dbReference>
<dbReference type="PANTHER" id="PTHR13056:SF0">
    <property type="entry name" value="VACUOLAR FUSION PROTEIN CCZ1 HOMOLOG-RELATED"/>
    <property type="match status" value="1"/>
</dbReference>
<dbReference type="Pfam" id="PF19031">
    <property type="entry name" value="Intu_longin_1"/>
    <property type="match status" value="1"/>
</dbReference>
<protein>
    <recommendedName>
        <fullName evidence="3">Vacuolar fusion protein CCZ1 homolog</fullName>
    </recommendedName>
</protein>
<organism evidence="5">
    <name type="scientific">Oryza sativa subsp. japonica</name>
    <name type="common">Rice</name>
    <dbReference type="NCBI Taxonomy" id="39947"/>
    <lineage>
        <taxon>Eukaryota</taxon>
        <taxon>Viridiplantae</taxon>
        <taxon>Streptophyta</taxon>
        <taxon>Embryophyta</taxon>
        <taxon>Tracheophyta</taxon>
        <taxon>Spermatophyta</taxon>
        <taxon>Magnoliopsida</taxon>
        <taxon>Liliopsida</taxon>
        <taxon>Poales</taxon>
        <taxon>Poaceae</taxon>
        <taxon>BOP clade</taxon>
        <taxon>Oryzoideae</taxon>
        <taxon>Oryzeae</taxon>
        <taxon>Oryzinae</taxon>
        <taxon>Oryza</taxon>
        <taxon>Oryza sativa</taxon>
    </lineage>
</organism>
<gene>
    <name evidence="3" type="primary">CCZ1</name>
    <name evidence="3" type="synonym">NP70</name>
    <name evidence="6" type="ordered locus">Os08g0427300</name>
    <name evidence="3" type="ordered locus">LOC_Os08g33076</name>
    <name evidence="4" type="ORF">OJ1663_D06.7</name>
    <name evidence="5" type="ORF">OSJNBb0032E15.114</name>
</gene>
<reference key="1">
    <citation type="journal article" date="2005" name="Nature">
        <title>The map-based sequence of the rice genome.</title>
        <authorList>
            <consortium name="International rice genome sequencing project (IRGSP)"/>
        </authorList>
    </citation>
    <scope>NUCLEOTIDE SEQUENCE [LARGE SCALE GENOMIC DNA]</scope>
    <source>
        <strain>cv. Nipponbare</strain>
    </source>
</reference>
<reference key="2">
    <citation type="journal article" date="2008" name="Nucleic Acids Res.">
        <title>The rice annotation project database (RAP-DB): 2008 update.</title>
        <authorList>
            <consortium name="The rice annotation project (RAP)"/>
        </authorList>
    </citation>
    <scope>GENOME REANNOTATION</scope>
    <source>
        <strain>cv. Nipponbare</strain>
    </source>
</reference>
<reference key="3">
    <citation type="journal article" date="2013" name="Rice">
        <title>Improvement of the Oryza sativa Nipponbare reference genome using next generation sequence and optical map data.</title>
        <authorList>
            <person name="Kawahara Y."/>
            <person name="de la Bastide M."/>
            <person name="Hamilton J.P."/>
            <person name="Kanamori H."/>
            <person name="McCombie W.R."/>
            <person name="Ouyang S."/>
            <person name="Schwartz D.C."/>
            <person name="Tanaka T."/>
            <person name="Wu J."/>
            <person name="Zhou S."/>
            <person name="Childs K.L."/>
            <person name="Davidson R.M."/>
            <person name="Lin H."/>
            <person name="Quesada-Ocampo L."/>
            <person name="Vaillancourt B."/>
            <person name="Sakai H."/>
            <person name="Lee S.S."/>
            <person name="Kim J."/>
            <person name="Numa H."/>
            <person name="Itoh T."/>
            <person name="Buell C.R."/>
            <person name="Matsumoto T."/>
        </authorList>
    </citation>
    <scope>GENOME REANNOTATION</scope>
    <source>
        <strain>cv. Nipponbare</strain>
    </source>
</reference>
<reference key="4">
    <citation type="journal article" date="2003" name="Science">
        <title>Collection, mapping, and annotation of over 28,000 cDNA clones from japonica rice.</title>
        <authorList>
            <consortium name="The rice full-length cDNA consortium"/>
        </authorList>
    </citation>
    <scope>NUCLEOTIDE SEQUENCE [LARGE SCALE MRNA]</scope>
    <source>
        <strain>cv. Nipponbare</strain>
    </source>
</reference>
<proteinExistence type="evidence at transcript level"/>